<dbReference type="EC" id="7.-.-.-" evidence="1"/>
<dbReference type="EMBL" id="CP000886">
    <property type="protein sequence ID" value="ABX67254.1"/>
    <property type="molecule type" value="Genomic_DNA"/>
</dbReference>
<dbReference type="RefSeq" id="WP_000133179.1">
    <property type="nucleotide sequence ID" value="NC_010102.1"/>
</dbReference>
<dbReference type="SMR" id="A9N023"/>
<dbReference type="GeneID" id="66755900"/>
<dbReference type="KEGG" id="spq:SPAB_01861"/>
<dbReference type="PATRIC" id="fig|1016998.12.peg.1753"/>
<dbReference type="HOGENOM" id="CLU_095255_1_0_6"/>
<dbReference type="BioCyc" id="SENT1016998:SPAB_RS07550-MONOMER"/>
<dbReference type="Proteomes" id="UP000008556">
    <property type="component" value="Chromosome"/>
</dbReference>
<dbReference type="GO" id="GO:0005886">
    <property type="term" value="C:plasma membrane"/>
    <property type="evidence" value="ECO:0007669"/>
    <property type="project" value="UniProtKB-SubCell"/>
</dbReference>
<dbReference type="GO" id="GO:0022900">
    <property type="term" value="P:electron transport chain"/>
    <property type="evidence" value="ECO:0007669"/>
    <property type="project" value="UniProtKB-UniRule"/>
</dbReference>
<dbReference type="HAMAP" id="MF_00459">
    <property type="entry name" value="RsxA_RnfA"/>
    <property type="match status" value="1"/>
</dbReference>
<dbReference type="InterPro" id="IPR011293">
    <property type="entry name" value="Ion_transpt_RnfA/RsxA"/>
</dbReference>
<dbReference type="InterPro" id="IPR003667">
    <property type="entry name" value="NqrDE/RnfAE"/>
</dbReference>
<dbReference type="InterPro" id="IPR050133">
    <property type="entry name" value="NqrDE/RnfAE_oxidrdctase"/>
</dbReference>
<dbReference type="NCBIfam" id="NF003481">
    <property type="entry name" value="PRK05151.1"/>
    <property type="match status" value="1"/>
</dbReference>
<dbReference type="NCBIfam" id="TIGR01943">
    <property type="entry name" value="rnfA"/>
    <property type="match status" value="1"/>
</dbReference>
<dbReference type="PANTHER" id="PTHR30335">
    <property type="entry name" value="INTEGRAL MEMBRANE PROTEIN OF SOXR-REDUCING COMPLEX"/>
    <property type="match status" value="1"/>
</dbReference>
<dbReference type="PANTHER" id="PTHR30335:SF0">
    <property type="entry name" value="ION-TRANSLOCATING OXIDOREDUCTASE COMPLEX SUBUNIT A"/>
    <property type="match status" value="1"/>
</dbReference>
<dbReference type="Pfam" id="PF02508">
    <property type="entry name" value="Rnf-Nqr"/>
    <property type="match status" value="1"/>
</dbReference>
<dbReference type="PIRSF" id="PIRSF006102">
    <property type="entry name" value="NQR_DE"/>
    <property type="match status" value="1"/>
</dbReference>
<reference key="1">
    <citation type="submission" date="2007-11" db="EMBL/GenBank/DDBJ databases">
        <authorList>
            <consortium name="The Salmonella enterica serovar Paratyphi B Genome Sequencing Project"/>
            <person name="McClelland M."/>
            <person name="Sanderson E.K."/>
            <person name="Porwollik S."/>
            <person name="Spieth J."/>
            <person name="Clifton W.S."/>
            <person name="Fulton R."/>
            <person name="Cordes M."/>
            <person name="Wollam A."/>
            <person name="Shah N."/>
            <person name="Pepin K."/>
            <person name="Bhonagiri V."/>
            <person name="Nash W."/>
            <person name="Johnson M."/>
            <person name="Thiruvilangam P."/>
            <person name="Wilson R."/>
        </authorList>
    </citation>
    <scope>NUCLEOTIDE SEQUENCE [LARGE SCALE GENOMIC DNA]</scope>
    <source>
        <strain>ATCC BAA-1250 / SPB7</strain>
    </source>
</reference>
<name>RSXA_SALPB</name>
<organism>
    <name type="scientific">Salmonella paratyphi B (strain ATCC BAA-1250 / SPB7)</name>
    <dbReference type="NCBI Taxonomy" id="1016998"/>
    <lineage>
        <taxon>Bacteria</taxon>
        <taxon>Pseudomonadati</taxon>
        <taxon>Pseudomonadota</taxon>
        <taxon>Gammaproteobacteria</taxon>
        <taxon>Enterobacterales</taxon>
        <taxon>Enterobacteriaceae</taxon>
        <taxon>Salmonella</taxon>
    </lineage>
</organism>
<gene>
    <name evidence="1" type="primary">rsxA</name>
    <name type="ordered locus">SPAB_01861</name>
</gene>
<keyword id="KW-0997">Cell inner membrane</keyword>
<keyword id="KW-1003">Cell membrane</keyword>
<keyword id="KW-0249">Electron transport</keyword>
<keyword id="KW-0472">Membrane</keyword>
<keyword id="KW-1278">Translocase</keyword>
<keyword id="KW-0812">Transmembrane</keyword>
<keyword id="KW-1133">Transmembrane helix</keyword>
<keyword id="KW-0813">Transport</keyword>
<feature type="chain" id="PRO_1000081133" description="Ion-translocating oxidoreductase complex subunit A">
    <location>
        <begin position="1"/>
        <end position="193"/>
    </location>
</feature>
<feature type="transmembrane region" description="Helical" evidence="1">
    <location>
        <begin position="5"/>
        <end position="25"/>
    </location>
</feature>
<feature type="transmembrane region" description="Helical" evidence="1">
    <location>
        <begin position="47"/>
        <end position="67"/>
    </location>
</feature>
<feature type="transmembrane region" description="Helical" evidence="1">
    <location>
        <begin position="72"/>
        <end position="92"/>
    </location>
</feature>
<feature type="transmembrane region" description="Helical" evidence="1">
    <location>
        <begin position="102"/>
        <end position="122"/>
    </location>
</feature>
<feature type="transmembrane region" description="Helical" evidence="1">
    <location>
        <begin position="134"/>
        <end position="154"/>
    </location>
</feature>
<feature type="transmembrane region" description="Helical" evidence="1">
    <location>
        <begin position="171"/>
        <end position="191"/>
    </location>
</feature>
<sequence>MTDYLLLFVGTVLVNNFVLVKFLGLCPFMGVSKKLETAMGMGLATTFVMTLASICAWLIDTWILIPLDLIYLRTLAFILVIAVVVQFTEMVVRKTSPALYRLLGIFLPLITTNCAVLGVALLNINLGHHFLQSALYGFSAAVGFSLVMVLFAAIRERLAVADVPAPFRGNAIALITAGLMSLAFMGFSGLVKL</sequence>
<evidence type="ECO:0000255" key="1">
    <source>
        <dbReference type="HAMAP-Rule" id="MF_00459"/>
    </source>
</evidence>
<protein>
    <recommendedName>
        <fullName evidence="1">Ion-translocating oxidoreductase complex subunit A</fullName>
        <ecNumber evidence="1">7.-.-.-</ecNumber>
    </recommendedName>
    <alternativeName>
        <fullName evidence="1">Rsx electron transport complex subunit A</fullName>
    </alternativeName>
</protein>
<proteinExistence type="inferred from homology"/>
<comment type="function">
    <text evidence="1">Part of a membrane-bound complex that couples electron transfer with translocation of ions across the membrane. Required to maintain the reduced state of SoxR.</text>
</comment>
<comment type="subunit">
    <text evidence="1">The complex is composed of six subunits: RsxA, RsxB, RsxC, RsxD, RsxE and RsxG.</text>
</comment>
<comment type="subcellular location">
    <subcellularLocation>
        <location evidence="1">Cell inner membrane</location>
        <topology evidence="1">Multi-pass membrane protein</topology>
    </subcellularLocation>
</comment>
<comment type="similarity">
    <text evidence="1">Belongs to the NqrDE/RnfAE family.</text>
</comment>
<accession>A9N023</accession>